<feature type="chain" id="PRO_0000180147" description="Acyl carrier protein">
    <location>
        <begin position="1"/>
        <end position="77"/>
    </location>
</feature>
<feature type="domain" description="Carrier" evidence="2">
    <location>
        <begin position="1"/>
        <end position="76"/>
    </location>
</feature>
<feature type="modified residue" description="O-(pantetheine 4'-phosphoryl)serine" evidence="2">
    <location>
        <position position="36"/>
    </location>
</feature>
<accession>Q75FW6</accession>
<protein>
    <recommendedName>
        <fullName evidence="1">Acyl carrier protein</fullName>
        <shortName evidence="1">ACP</shortName>
    </recommendedName>
</protein>
<name>ACP_LEPIC</name>
<gene>
    <name evidence="1" type="primary">acpP</name>
    <name type="ordered locus">LIC_20065</name>
</gene>
<sequence>MADFEKVKSIIVEQLGVDESEVTPEAHFIDDLGADSLDTVELVMALEEEFGIEISDEDAEKIQTVGDVTKFIDNLKS</sequence>
<comment type="function">
    <text evidence="1">Carrier of the growing fatty acid chain in fatty acid biosynthesis.</text>
</comment>
<comment type="pathway">
    <text evidence="1">Lipid metabolism; fatty acid biosynthesis.</text>
</comment>
<comment type="subcellular location">
    <subcellularLocation>
        <location evidence="1">Cytoplasm</location>
    </subcellularLocation>
</comment>
<comment type="PTM">
    <text evidence="1">4'-phosphopantetheine is transferred from CoA to a specific serine of apo-ACP by AcpS. This modification is essential for activity because fatty acids are bound in thioester linkage to the sulfhydryl of the prosthetic group.</text>
</comment>
<comment type="similarity">
    <text evidence="1">Belongs to the acyl carrier protein (ACP) family.</text>
</comment>
<keyword id="KW-0963">Cytoplasm</keyword>
<keyword id="KW-0275">Fatty acid biosynthesis</keyword>
<keyword id="KW-0276">Fatty acid metabolism</keyword>
<keyword id="KW-0444">Lipid biosynthesis</keyword>
<keyword id="KW-0443">Lipid metabolism</keyword>
<keyword id="KW-0596">Phosphopantetheine</keyword>
<keyword id="KW-0597">Phosphoprotein</keyword>
<reference key="1">
    <citation type="journal article" date="2004" name="J. Bacteriol.">
        <title>Comparative genomics of two Leptospira interrogans serovars reveals novel insights into physiology and pathogenesis.</title>
        <authorList>
            <person name="Nascimento A.L.T.O."/>
            <person name="Ko A.I."/>
            <person name="Martins E.A.L."/>
            <person name="Monteiro-Vitorello C.B."/>
            <person name="Ho P.L."/>
            <person name="Haake D.A."/>
            <person name="Verjovski-Almeida S."/>
            <person name="Hartskeerl R.A."/>
            <person name="Marques M.V."/>
            <person name="Oliveira M.C."/>
            <person name="Menck C.F.M."/>
            <person name="Leite L.C.C."/>
            <person name="Carrer H."/>
            <person name="Coutinho L.L."/>
            <person name="Degrave W.M."/>
            <person name="Dellagostin O.A."/>
            <person name="El-Dorry H."/>
            <person name="Ferro E.S."/>
            <person name="Ferro M.I.T."/>
            <person name="Furlan L.R."/>
            <person name="Gamberini M."/>
            <person name="Giglioti E.A."/>
            <person name="Goes-Neto A."/>
            <person name="Goldman G.H."/>
            <person name="Goldman M.H.S."/>
            <person name="Harakava R."/>
            <person name="Jeronimo S.M.B."/>
            <person name="Junqueira-de-Azevedo I.L.M."/>
            <person name="Kimura E.T."/>
            <person name="Kuramae E.E."/>
            <person name="Lemos E.G.M."/>
            <person name="Lemos M.V.F."/>
            <person name="Marino C.L."/>
            <person name="Nunes L.R."/>
            <person name="de Oliveira R.C."/>
            <person name="Pereira G.G."/>
            <person name="Reis M.S."/>
            <person name="Schriefer A."/>
            <person name="Siqueira W.J."/>
            <person name="Sommer P."/>
            <person name="Tsai S.M."/>
            <person name="Simpson A.J.G."/>
            <person name="Ferro J.A."/>
            <person name="Camargo L.E.A."/>
            <person name="Kitajima J.P."/>
            <person name="Setubal J.C."/>
            <person name="Van Sluys M.A."/>
        </authorList>
    </citation>
    <scope>NUCLEOTIDE SEQUENCE [LARGE SCALE GENOMIC DNA]</scope>
    <source>
        <strain>Fiocruz L1-130</strain>
    </source>
</reference>
<dbReference type="EMBL" id="AE016824">
    <property type="protein sequence ID" value="AAS72094.1"/>
    <property type="molecule type" value="Genomic_DNA"/>
</dbReference>
<dbReference type="RefSeq" id="WP_000753030.1">
    <property type="nucleotide sequence ID" value="NC_005824.1"/>
</dbReference>
<dbReference type="SMR" id="Q75FW6"/>
<dbReference type="GeneID" id="61173552"/>
<dbReference type="KEGG" id="lic:LIC_20065"/>
<dbReference type="HOGENOM" id="CLU_108696_5_1_12"/>
<dbReference type="UniPathway" id="UPA00094"/>
<dbReference type="Proteomes" id="UP000007037">
    <property type="component" value="Chromosome II"/>
</dbReference>
<dbReference type="GO" id="GO:0005829">
    <property type="term" value="C:cytosol"/>
    <property type="evidence" value="ECO:0007669"/>
    <property type="project" value="TreeGrafter"/>
</dbReference>
<dbReference type="GO" id="GO:0016020">
    <property type="term" value="C:membrane"/>
    <property type="evidence" value="ECO:0007669"/>
    <property type="project" value="GOC"/>
</dbReference>
<dbReference type="GO" id="GO:0000035">
    <property type="term" value="F:acyl binding"/>
    <property type="evidence" value="ECO:0007669"/>
    <property type="project" value="TreeGrafter"/>
</dbReference>
<dbReference type="GO" id="GO:0000036">
    <property type="term" value="F:acyl carrier activity"/>
    <property type="evidence" value="ECO:0007669"/>
    <property type="project" value="UniProtKB-UniRule"/>
</dbReference>
<dbReference type="GO" id="GO:0009245">
    <property type="term" value="P:lipid A biosynthetic process"/>
    <property type="evidence" value="ECO:0007669"/>
    <property type="project" value="TreeGrafter"/>
</dbReference>
<dbReference type="FunFam" id="1.10.1200.10:FF:000001">
    <property type="entry name" value="Acyl carrier protein"/>
    <property type="match status" value="1"/>
</dbReference>
<dbReference type="Gene3D" id="1.10.1200.10">
    <property type="entry name" value="ACP-like"/>
    <property type="match status" value="1"/>
</dbReference>
<dbReference type="HAMAP" id="MF_01217">
    <property type="entry name" value="Acyl_carrier"/>
    <property type="match status" value="1"/>
</dbReference>
<dbReference type="InterPro" id="IPR003231">
    <property type="entry name" value="ACP"/>
</dbReference>
<dbReference type="InterPro" id="IPR036736">
    <property type="entry name" value="ACP-like_sf"/>
</dbReference>
<dbReference type="InterPro" id="IPR009081">
    <property type="entry name" value="PP-bd_ACP"/>
</dbReference>
<dbReference type="InterPro" id="IPR006162">
    <property type="entry name" value="Ppantetheine_attach_site"/>
</dbReference>
<dbReference type="NCBIfam" id="TIGR00517">
    <property type="entry name" value="acyl_carrier"/>
    <property type="match status" value="1"/>
</dbReference>
<dbReference type="NCBIfam" id="NF002148">
    <property type="entry name" value="PRK00982.1-2"/>
    <property type="match status" value="1"/>
</dbReference>
<dbReference type="NCBIfam" id="NF002149">
    <property type="entry name" value="PRK00982.1-3"/>
    <property type="match status" value="1"/>
</dbReference>
<dbReference type="NCBIfam" id="NF002150">
    <property type="entry name" value="PRK00982.1-4"/>
    <property type="match status" value="1"/>
</dbReference>
<dbReference type="NCBIfam" id="NF002151">
    <property type="entry name" value="PRK00982.1-5"/>
    <property type="match status" value="1"/>
</dbReference>
<dbReference type="PANTHER" id="PTHR20863">
    <property type="entry name" value="ACYL CARRIER PROTEIN"/>
    <property type="match status" value="1"/>
</dbReference>
<dbReference type="PANTHER" id="PTHR20863:SF76">
    <property type="entry name" value="CARRIER DOMAIN-CONTAINING PROTEIN"/>
    <property type="match status" value="1"/>
</dbReference>
<dbReference type="Pfam" id="PF00550">
    <property type="entry name" value="PP-binding"/>
    <property type="match status" value="1"/>
</dbReference>
<dbReference type="SUPFAM" id="SSF47336">
    <property type="entry name" value="ACP-like"/>
    <property type="match status" value="1"/>
</dbReference>
<dbReference type="PROSITE" id="PS50075">
    <property type="entry name" value="CARRIER"/>
    <property type="match status" value="1"/>
</dbReference>
<dbReference type="PROSITE" id="PS00012">
    <property type="entry name" value="PHOSPHOPANTETHEINE"/>
    <property type="match status" value="1"/>
</dbReference>
<evidence type="ECO:0000255" key="1">
    <source>
        <dbReference type="HAMAP-Rule" id="MF_01217"/>
    </source>
</evidence>
<evidence type="ECO:0000255" key="2">
    <source>
        <dbReference type="PROSITE-ProRule" id="PRU00258"/>
    </source>
</evidence>
<organism>
    <name type="scientific">Leptospira interrogans serogroup Icterohaemorrhagiae serovar copenhageni (strain Fiocruz L1-130)</name>
    <dbReference type="NCBI Taxonomy" id="267671"/>
    <lineage>
        <taxon>Bacteria</taxon>
        <taxon>Pseudomonadati</taxon>
        <taxon>Spirochaetota</taxon>
        <taxon>Spirochaetia</taxon>
        <taxon>Leptospirales</taxon>
        <taxon>Leptospiraceae</taxon>
        <taxon>Leptospira</taxon>
    </lineage>
</organism>
<proteinExistence type="inferred from homology"/>